<feature type="chain" id="PRO_1000199309" description="Phenylalanine--tRNA ligase alpha subunit">
    <location>
        <begin position="1"/>
        <end position="327"/>
    </location>
</feature>
<feature type="binding site" evidence="1">
    <location>
        <position position="252"/>
    </location>
    <ligand>
        <name>Mg(2+)</name>
        <dbReference type="ChEBI" id="CHEBI:18420"/>
        <note>shared with beta subunit</note>
    </ligand>
</feature>
<keyword id="KW-0030">Aminoacyl-tRNA synthetase</keyword>
<keyword id="KW-0067">ATP-binding</keyword>
<keyword id="KW-0963">Cytoplasm</keyword>
<keyword id="KW-0436">Ligase</keyword>
<keyword id="KW-0460">Magnesium</keyword>
<keyword id="KW-0479">Metal-binding</keyword>
<keyword id="KW-0547">Nucleotide-binding</keyword>
<keyword id="KW-0648">Protein biosynthesis</keyword>
<keyword id="KW-1185">Reference proteome</keyword>
<comment type="catalytic activity">
    <reaction evidence="1">
        <text>tRNA(Phe) + L-phenylalanine + ATP = L-phenylalanyl-tRNA(Phe) + AMP + diphosphate + H(+)</text>
        <dbReference type="Rhea" id="RHEA:19413"/>
        <dbReference type="Rhea" id="RHEA-COMP:9668"/>
        <dbReference type="Rhea" id="RHEA-COMP:9699"/>
        <dbReference type="ChEBI" id="CHEBI:15378"/>
        <dbReference type="ChEBI" id="CHEBI:30616"/>
        <dbReference type="ChEBI" id="CHEBI:33019"/>
        <dbReference type="ChEBI" id="CHEBI:58095"/>
        <dbReference type="ChEBI" id="CHEBI:78442"/>
        <dbReference type="ChEBI" id="CHEBI:78531"/>
        <dbReference type="ChEBI" id="CHEBI:456215"/>
        <dbReference type="EC" id="6.1.1.20"/>
    </reaction>
</comment>
<comment type="cofactor">
    <cofactor evidence="1">
        <name>Mg(2+)</name>
        <dbReference type="ChEBI" id="CHEBI:18420"/>
    </cofactor>
    <text evidence="1">Binds 2 magnesium ions per tetramer.</text>
</comment>
<comment type="subunit">
    <text evidence="1">Tetramer of two alpha and two beta subunits.</text>
</comment>
<comment type="subcellular location">
    <subcellularLocation>
        <location evidence="1">Cytoplasm</location>
    </subcellularLocation>
</comment>
<comment type="similarity">
    <text evidence="1">Belongs to the class-II aminoacyl-tRNA synthetase family. Phe-tRNA synthetase alpha subunit type 1 subfamily.</text>
</comment>
<reference key="1">
    <citation type="journal article" date="2009" name="J. Bacteriol.">
        <title>Complete genome sequence and comparative genome analysis of enteropathogenic Escherichia coli O127:H6 strain E2348/69.</title>
        <authorList>
            <person name="Iguchi A."/>
            <person name="Thomson N.R."/>
            <person name="Ogura Y."/>
            <person name="Saunders D."/>
            <person name="Ooka T."/>
            <person name="Henderson I.R."/>
            <person name="Harris D."/>
            <person name="Asadulghani M."/>
            <person name="Kurokawa K."/>
            <person name="Dean P."/>
            <person name="Kenny B."/>
            <person name="Quail M.A."/>
            <person name="Thurston S."/>
            <person name="Dougan G."/>
            <person name="Hayashi T."/>
            <person name="Parkhill J."/>
            <person name="Frankel G."/>
        </authorList>
    </citation>
    <scope>NUCLEOTIDE SEQUENCE [LARGE SCALE GENOMIC DNA]</scope>
    <source>
        <strain>E2348/69 / EPEC</strain>
    </source>
</reference>
<proteinExistence type="inferred from homology"/>
<dbReference type="EC" id="6.1.1.20" evidence="1"/>
<dbReference type="EMBL" id="FM180568">
    <property type="protein sequence ID" value="CAS09391.1"/>
    <property type="molecule type" value="Genomic_DNA"/>
</dbReference>
<dbReference type="RefSeq" id="WP_000018588.1">
    <property type="nucleotide sequence ID" value="NC_011601.1"/>
</dbReference>
<dbReference type="SMR" id="B7US97"/>
<dbReference type="GeneID" id="86946239"/>
<dbReference type="KEGG" id="ecg:E2348C_1843"/>
<dbReference type="HOGENOM" id="CLU_025086_0_1_6"/>
<dbReference type="Proteomes" id="UP000008205">
    <property type="component" value="Chromosome"/>
</dbReference>
<dbReference type="GO" id="GO:0005737">
    <property type="term" value="C:cytoplasm"/>
    <property type="evidence" value="ECO:0007669"/>
    <property type="project" value="UniProtKB-SubCell"/>
</dbReference>
<dbReference type="GO" id="GO:0005524">
    <property type="term" value="F:ATP binding"/>
    <property type="evidence" value="ECO:0007669"/>
    <property type="project" value="UniProtKB-UniRule"/>
</dbReference>
<dbReference type="GO" id="GO:0000287">
    <property type="term" value="F:magnesium ion binding"/>
    <property type="evidence" value="ECO:0007669"/>
    <property type="project" value="UniProtKB-UniRule"/>
</dbReference>
<dbReference type="GO" id="GO:0004826">
    <property type="term" value="F:phenylalanine-tRNA ligase activity"/>
    <property type="evidence" value="ECO:0007669"/>
    <property type="project" value="UniProtKB-UniRule"/>
</dbReference>
<dbReference type="GO" id="GO:0000049">
    <property type="term" value="F:tRNA binding"/>
    <property type="evidence" value="ECO:0007669"/>
    <property type="project" value="InterPro"/>
</dbReference>
<dbReference type="GO" id="GO:0006432">
    <property type="term" value="P:phenylalanyl-tRNA aminoacylation"/>
    <property type="evidence" value="ECO:0007669"/>
    <property type="project" value="UniProtKB-UniRule"/>
</dbReference>
<dbReference type="CDD" id="cd00496">
    <property type="entry name" value="PheRS_alpha_core"/>
    <property type="match status" value="1"/>
</dbReference>
<dbReference type="FunFam" id="3.30.930.10:FF:000003">
    <property type="entry name" value="Phenylalanine--tRNA ligase alpha subunit"/>
    <property type="match status" value="1"/>
</dbReference>
<dbReference type="Gene3D" id="3.30.930.10">
    <property type="entry name" value="Bira Bifunctional Protein, Domain 2"/>
    <property type="match status" value="1"/>
</dbReference>
<dbReference type="HAMAP" id="MF_00281">
    <property type="entry name" value="Phe_tRNA_synth_alpha1"/>
    <property type="match status" value="1"/>
</dbReference>
<dbReference type="InterPro" id="IPR006195">
    <property type="entry name" value="aa-tRNA-synth_II"/>
</dbReference>
<dbReference type="InterPro" id="IPR045864">
    <property type="entry name" value="aa-tRNA-synth_II/BPL/LPL"/>
</dbReference>
<dbReference type="InterPro" id="IPR004529">
    <property type="entry name" value="Phe-tRNA-synth_IIc_asu"/>
</dbReference>
<dbReference type="InterPro" id="IPR004188">
    <property type="entry name" value="Phe-tRNA_ligase_II_N"/>
</dbReference>
<dbReference type="InterPro" id="IPR022911">
    <property type="entry name" value="Phe_tRNA_ligase_alpha1_bac"/>
</dbReference>
<dbReference type="InterPro" id="IPR002319">
    <property type="entry name" value="Phenylalanyl-tRNA_Synthase"/>
</dbReference>
<dbReference type="InterPro" id="IPR010978">
    <property type="entry name" value="tRNA-bd_arm"/>
</dbReference>
<dbReference type="NCBIfam" id="TIGR00468">
    <property type="entry name" value="pheS"/>
    <property type="match status" value="1"/>
</dbReference>
<dbReference type="PANTHER" id="PTHR11538:SF41">
    <property type="entry name" value="PHENYLALANINE--TRNA LIGASE, MITOCHONDRIAL"/>
    <property type="match status" value="1"/>
</dbReference>
<dbReference type="PANTHER" id="PTHR11538">
    <property type="entry name" value="PHENYLALANYL-TRNA SYNTHETASE"/>
    <property type="match status" value="1"/>
</dbReference>
<dbReference type="Pfam" id="PF02912">
    <property type="entry name" value="Phe_tRNA-synt_N"/>
    <property type="match status" value="1"/>
</dbReference>
<dbReference type="Pfam" id="PF01409">
    <property type="entry name" value="tRNA-synt_2d"/>
    <property type="match status" value="1"/>
</dbReference>
<dbReference type="SUPFAM" id="SSF55681">
    <property type="entry name" value="Class II aaRS and biotin synthetases"/>
    <property type="match status" value="1"/>
</dbReference>
<dbReference type="SUPFAM" id="SSF46589">
    <property type="entry name" value="tRNA-binding arm"/>
    <property type="match status" value="1"/>
</dbReference>
<dbReference type="PROSITE" id="PS50862">
    <property type="entry name" value="AA_TRNA_LIGASE_II"/>
    <property type="match status" value="1"/>
</dbReference>
<gene>
    <name evidence="1" type="primary">pheS</name>
    <name type="ordered locus">E2348C_1843</name>
</gene>
<sequence length="327" mass="36802">MSHLAELVASAKAAISQASDVAALDNVRVEYLGKKGHLTLQMTTLRELPPEERPAAGAVINEAKEQVQQALNARKAELESAALNARLAAETIDVSLPGRRIENGGLHPVTRTIDRIESFFGELGFTVATGPEIEDDYHNFDALNIPGHHPARADHDTFWFDATRLLRTQTSGVQIRTMKAQQPPIRIIAPGRVYRNDYDQTHTPMFHQMEGLIVDTNISFTNLKGTLHDFLRNFFEEDLQIRFRPSYFPFTEPSAEVDVMGKNGKWLEVLGCGMVHPNVLRNVGIDPEVYSGFAFGMGMERLTMLRYGVTDLRSFFENDLRFLKQFK</sequence>
<organism>
    <name type="scientific">Escherichia coli O127:H6 (strain E2348/69 / EPEC)</name>
    <dbReference type="NCBI Taxonomy" id="574521"/>
    <lineage>
        <taxon>Bacteria</taxon>
        <taxon>Pseudomonadati</taxon>
        <taxon>Pseudomonadota</taxon>
        <taxon>Gammaproteobacteria</taxon>
        <taxon>Enterobacterales</taxon>
        <taxon>Enterobacteriaceae</taxon>
        <taxon>Escherichia</taxon>
    </lineage>
</organism>
<name>SYFA_ECO27</name>
<accession>B7US97</accession>
<protein>
    <recommendedName>
        <fullName evidence="1">Phenylalanine--tRNA ligase alpha subunit</fullName>
        <ecNumber evidence="1">6.1.1.20</ecNumber>
    </recommendedName>
    <alternativeName>
        <fullName evidence="1">Phenylalanyl-tRNA synthetase alpha subunit</fullName>
        <shortName evidence="1">PheRS</shortName>
    </alternativeName>
</protein>
<evidence type="ECO:0000255" key="1">
    <source>
        <dbReference type="HAMAP-Rule" id="MF_00281"/>
    </source>
</evidence>